<reference key="1">
    <citation type="journal article" date="1992" name="Gene">
        <title>Structure of the Drosophila melanogaster gene encoding cyclin A.</title>
        <authorList>
            <person name="Takahisa M."/>
            <person name="Togashi S."/>
            <person name="Ueda R."/>
            <person name="Mikuni M."/>
            <person name="Tsurumura S."/>
            <person name="Kondo K."/>
            <person name="Miyake T."/>
        </authorList>
    </citation>
    <scope>NUCLEOTIDE SEQUENCE [GENOMIC DNA / MRNA] (ISOFORM A)</scope>
    <source>
        <strain>Canton-S</strain>
    </source>
</reference>
<reference key="2">
    <citation type="journal article" date="1989" name="Cell">
        <title>Expression and function of Drosophila cyclin A during embryonic cell cycle progression.</title>
        <authorList>
            <person name="Lehner C.F."/>
            <person name="O'Farrell P.H."/>
        </authorList>
    </citation>
    <scope>NUCLEOTIDE SEQUENCE [GENOMIC DNA] (ISOFORM A)</scope>
</reference>
<reference key="3">
    <citation type="journal article" date="2000" name="Science">
        <title>The genome sequence of Drosophila melanogaster.</title>
        <authorList>
            <person name="Adams M.D."/>
            <person name="Celniker S.E."/>
            <person name="Holt R.A."/>
            <person name="Evans C.A."/>
            <person name="Gocayne J.D."/>
            <person name="Amanatides P.G."/>
            <person name="Scherer S.E."/>
            <person name="Li P.W."/>
            <person name="Hoskins R.A."/>
            <person name="Galle R.F."/>
            <person name="George R.A."/>
            <person name="Lewis S.E."/>
            <person name="Richards S."/>
            <person name="Ashburner M."/>
            <person name="Henderson S.N."/>
            <person name="Sutton G.G."/>
            <person name="Wortman J.R."/>
            <person name="Yandell M.D."/>
            <person name="Zhang Q."/>
            <person name="Chen L.X."/>
            <person name="Brandon R.C."/>
            <person name="Rogers Y.-H.C."/>
            <person name="Blazej R.G."/>
            <person name="Champe M."/>
            <person name="Pfeiffer B.D."/>
            <person name="Wan K.H."/>
            <person name="Doyle C."/>
            <person name="Baxter E.G."/>
            <person name="Helt G."/>
            <person name="Nelson C.R."/>
            <person name="Miklos G.L.G."/>
            <person name="Abril J.F."/>
            <person name="Agbayani A."/>
            <person name="An H.-J."/>
            <person name="Andrews-Pfannkoch C."/>
            <person name="Baldwin D."/>
            <person name="Ballew R.M."/>
            <person name="Basu A."/>
            <person name="Baxendale J."/>
            <person name="Bayraktaroglu L."/>
            <person name="Beasley E.M."/>
            <person name="Beeson K.Y."/>
            <person name="Benos P.V."/>
            <person name="Berman B.P."/>
            <person name="Bhandari D."/>
            <person name="Bolshakov S."/>
            <person name="Borkova D."/>
            <person name="Botchan M.R."/>
            <person name="Bouck J."/>
            <person name="Brokstein P."/>
            <person name="Brottier P."/>
            <person name="Burtis K.C."/>
            <person name="Busam D.A."/>
            <person name="Butler H."/>
            <person name="Cadieu E."/>
            <person name="Center A."/>
            <person name="Chandra I."/>
            <person name="Cherry J.M."/>
            <person name="Cawley S."/>
            <person name="Dahlke C."/>
            <person name="Davenport L.B."/>
            <person name="Davies P."/>
            <person name="de Pablos B."/>
            <person name="Delcher A."/>
            <person name="Deng Z."/>
            <person name="Mays A.D."/>
            <person name="Dew I."/>
            <person name="Dietz S.M."/>
            <person name="Dodson K."/>
            <person name="Doup L.E."/>
            <person name="Downes M."/>
            <person name="Dugan-Rocha S."/>
            <person name="Dunkov B.C."/>
            <person name="Dunn P."/>
            <person name="Durbin K.J."/>
            <person name="Evangelista C.C."/>
            <person name="Ferraz C."/>
            <person name="Ferriera S."/>
            <person name="Fleischmann W."/>
            <person name="Fosler C."/>
            <person name="Gabrielian A.E."/>
            <person name="Garg N.S."/>
            <person name="Gelbart W.M."/>
            <person name="Glasser K."/>
            <person name="Glodek A."/>
            <person name="Gong F."/>
            <person name="Gorrell J.H."/>
            <person name="Gu Z."/>
            <person name="Guan P."/>
            <person name="Harris M."/>
            <person name="Harris N.L."/>
            <person name="Harvey D.A."/>
            <person name="Heiman T.J."/>
            <person name="Hernandez J.R."/>
            <person name="Houck J."/>
            <person name="Hostin D."/>
            <person name="Houston K.A."/>
            <person name="Howland T.J."/>
            <person name="Wei M.-H."/>
            <person name="Ibegwam C."/>
            <person name="Jalali M."/>
            <person name="Kalush F."/>
            <person name="Karpen G.H."/>
            <person name="Ke Z."/>
            <person name="Kennison J.A."/>
            <person name="Ketchum K.A."/>
            <person name="Kimmel B.E."/>
            <person name="Kodira C.D."/>
            <person name="Kraft C.L."/>
            <person name="Kravitz S."/>
            <person name="Kulp D."/>
            <person name="Lai Z."/>
            <person name="Lasko P."/>
            <person name="Lei Y."/>
            <person name="Levitsky A.A."/>
            <person name="Li J.H."/>
            <person name="Li Z."/>
            <person name="Liang Y."/>
            <person name="Lin X."/>
            <person name="Liu X."/>
            <person name="Mattei B."/>
            <person name="McIntosh T.C."/>
            <person name="McLeod M.P."/>
            <person name="McPherson D."/>
            <person name="Merkulov G."/>
            <person name="Milshina N.V."/>
            <person name="Mobarry C."/>
            <person name="Morris J."/>
            <person name="Moshrefi A."/>
            <person name="Mount S.M."/>
            <person name="Moy M."/>
            <person name="Murphy B."/>
            <person name="Murphy L."/>
            <person name="Muzny D.M."/>
            <person name="Nelson D.L."/>
            <person name="Nelson D.R."/>
            <person name="Nelson K.A."/>
            <person name="Nixon K."/>
            <person name="Nusskern D.R."/>
            <person name="Pacleb J.M."/>
            <person name="Palazzolo M."/>
            <person name="Pittman G.S."/>
            <person name="Pan S."/>
            <person name="Pollard J."/>
            <person name="Puri V."/>
            <person name="Reese M.G."/>
            <person name="Reinert K."/>
            <person name="Remington K."/>
            <person name="Saunders R.D.C."/>
            <person name="Scheeler F."/>
            <person name="Shen H."/>
            <person name="Shue B.C."/>
            <person name="Siden-Kiamos I."/>
            <person name="Simpson M."/>
            <person name="Skupski M.P."/>
            <person name="Smith T.J."/>
            <person name="Spier E."/>
            <person name="Spradling A.C."/>
            <person name="Stapleton M."/>
            <person name="Strong R."/>
            <person name="Sun E."/>
            <person name="Svirskas R."/>
            <person name="Tector C."/>
            <person name="Turner R."/>
            <person name="Venter E."/>
            <person name="Wang A.H."/>
            <person name="Wang X."/>
            <person name="Wang Z.-Y."/>
            <person name="Wassarman D.A."/>
            <person name="Weinstock G.M."/>
            <person name="Weissenbach J."/>
            <person name="Williams S.M."/>
            <person name="Woodage T."/>
            <person name="Worley K.C."/>
            <person name="Wu D."/>
            <person name="Yang S."/>
            <person name="Yao Q.A."/>
            <person name="Ye J."/>
            <person name="Yeh R.-F."/>
            <person name="Zaveri J.S."/>
            <person name="Zhan M."/>
            <person name="Zhang G."/>
            <person name="Zhao Q."/>
            <person name="Zheng L."/>
            <person name="Zheng X.H."/>
            <person name="Zhong F.N."/>
            <person name="Zhong W."/>
            <person name="Zhou X."/>
            <person name="Zhu S.C."/>
            <person name="Zhu X."/>
            <person name="Smith H.O."/>
            <person name="Gibbs R.A."/>
            <person name="Myers E.W."/>
            <person name="Rubin G.M."/>
            <person name="Venter J.C."/>
        </authorList>
    </citation>
    <scope>NUCLEOTIDE SEQUENCE [LARGE SCALE GENOMIC DNA]</scope>
    <source>
        <strain>Berkeley</strain>
    </source>
</reference>
<reference key="4">
    <citation type="journal article" date="2002" name="Genome Biol.">
        <title>Annotation of the Drosophila melanogaster euchromatic genome: a systematic review.</title>
        <authorList>
            <person name="Misra S."/>
            <person name="Crosby M.A."/>
            <person name="Mungall C.J."/>
            <person name="Matthews B.B."/>
            <person name="Campbell K.S."/>
            <person name="Hradecky P."/>
            <person name="Huang Y."/>
            <person name="Kaminker J.S."/>
            <person name="Millburn G.H."/>
            <person name="Prochnik S.E."/>
            <person name="Smith C.D."/>
            <person name="Tupy J.L."/>
            <person name="Whitfield E.J."/>
            <person name="Bayraktaroglu L."/>
            <person name="Berman B.P."/>
            <person name="Bettencourt B.R."/>
            <person name="Celniker S.E."/>
            <person name="de Grey A.D.N.J."/>
            <person name="Drysdale R.A."/>
            <person name="Harris N.L."/>
            <person name="Richter J."/>
            <person name="Russo S."/>
            <person name="Schroeder A.J."/>
            <person name="Shu S.Q."/>
            <person name="Stapleton M."/>
            <person name="Yamada C."/>
            <person name="Ashburner M."/>
            <person name="Gelbart W.M."/>
            <person name="Rubin G.M."/>
            <person name="Lewis S.E."/>
        </authorList>
    </citation>
    <scope>GENOME REANNOTATION</scope>
    <scope>ALTERNATIVE SPLICING</scope>
    <source>
        <strain>Berkeley</strain>
    </source>
</reference>
<reference key="5">
    <citation type="journal article" date="2002" name="Genome Biol.">
        <title>A Drosophila full-length cDNA resource.</title>
        <authorList>
            <person name="Stapleton M."/>
            <person name="Carlson J.W."/>
            <person name="Brokstein P."/>
            <person name="Yu C."/>
            <person name="Champe M."/>
            <person name="George R.A."/>
            <person name="Guarin H."/>
            <person name="Kronmiller B."/>
            <person name="Pacleb J.M."/>
            <person name="Park S."/>
            <person name="Wan K.H."/>
            <person name="Rubin G.M."/>
            <person name="Celniker S.E."/>
        </authorList>
    </citation>
    <scope>NUCLEOTIDE SEQUENCE [LARGE SCALE MRNA] (ISOFORMS A AND B)</scope>
    <source>
        <strain>Berkeley</strain>
        <tissue>Embryo</tissue>
    </source>
</reference>
<reference key="6">
    <citation type="journal article" date="1989" name="Nature">
        <title>Transcripts of one of two Drosophila cyclin genes become localized in pole cells during embryogenesis.</title>
        <authorList>
            <person name="Whitfield W.G.F."/>
            <person name="Gonzalez C."/>
            <person name="Sanchez-Herrero E."/>
            <person name="Glover D.M."/>
        </authorList>
    </citation>
    <scope>NUCLEOTIDE SEQUENCE [MRNA] OF 235-247 AND 288-300</scope>
</reference>
<reference key="7">
    <citation type="journal article" date="2007" name="EMBO Rep.">
        <title>The Drosophila mitotic inhibitor Fruehstart specifically binds to the hydrophobic patch of cyclins.</title>
        <authorList>
            <person name="Gawlinski P."/>
            <person name="Nikolay R."/>
            <person name="Goursot C."/>
            <person name="Lawo S."/>
            <person name="Chaurasia B."/>
            <person name="Herz H.M."/>
            <person name="Kussler-Schneider Y."/>
            <person name="Ruppert T."/>
            <person name="Mayer M."/>
            <person name="Grosshans J."/>
        </authorList>
    </citation>
    <scope>IDENTIFICATION IN A COMPLEX WITH Z600 AND CDK1</scope>
    <scope>MUTAGENESIS OF MET-235; LEU-239 AND TRP-242</scope>
</reference>
<reference key="8">
    <citation type="journal article" date="2017" name="Proc. Natl. Acad. Sci. U.S.A.">
        <title>Bam-dependent deubiquitinase complex can disrupt germ-line stem cell maintenance by targeting cyclin A.</title>
        <authorList>
            <person name="Ji S."/>
            <person name="Li C."/>
            <person name="Hu L."/>
            <person name="Liu K."/>
            <person name="Mei J."/>
            <person name="Luo Y."/>
            <person name="Tao Y."/>
            <person name="Xia Z."/>
            <person name="Sun Q."/>
            <person name="Chen D."/>
        </authorList>
    </citation>
    <scope>INTERACTION WITH OTU AND BAM</scope>
    <scope>UBIQUITINATION</scope>
    <scope>DISRUPTION PHENOTYPE</scope>
</reference>
<dbReference type="EMBL" id="D10857">
    <property type="protein sequence ID" value="BAA01628.1"/>
    <property type="molecule type" value="Genomic_DNA"/>
</dbReference>
<dbReference type="EMBL" id="D10858">
    <property type="protein sequence ID" value="BAA01629.1"/>
    <property type="molecule type" value="mRNA"/>
</dbReference>
<dbReference type="EMBL" id="M24841">
    <property type="protein sequence ID" value="AAA28435.1"/>
    <property type="molecule type" value="Genomic_RNA"/>
</dbReference>
<dbReference type="EMBL" id="AE014296">
    <property type="protein sequence ID" value="AAF49999.2"/>
    <property type="molecule type" value="Genomic_DNA"/>
</dbReference>
<dbReference type="EMBL" id="AE014296">
    <property type="protein sequence ID" value="AAF50000.3"/>
    <property type="molecule type" value="Genomic_DNA"/>
</dbReference>
<dbReference type="EMBL" id="AY058712">
    <property type="protein sequence ID" value="AAL13941.1"/>
    <property type="molecule type" value="mRNA"/>
</dbReference>
<dbReference type="EMBL" id="BT001635">
    <property type="protein sequence ID" value="AAN71390.1"/>
    <property type="molecule type" value="mRNA"/>
</dbReference>
<dbReference type="PIR" id="JC1390">
    <property type="entry name" value="JC1390"/>
</dbReference>
<dbReference type="RefSeq" id="NP_524030.2">
    <molecule id="P14785-1"/>
    <property type="nucleotide sequence ID" value="NM_079306.4"/>
</dbReference>
<dbReference type="SMR" id="P14785"/>
<dbReference type="BioGRID" id="64701">
    <property type="interactions" value="67"/>
</dbReference>
<dbReference type="DIP" id="DIP-22019N"/>
<dbReference type="FunCoup" id="P14785">
    <property type="interactions" value="778"/>
</dbReference>
<dbReference type="IntAct" id="P14785">
    <property type="interactions" value="35"/>
</dbReference>
<dbReference type="MINT" id="P14785"/>
<dbReference type="STRING" id="7227.FBpp0075807"/>
<dbReference type="PaxDb" id="7227-FBpp0075807"/>
<dbReference type="DNASU" id="39340"/>
<dbReference type="EnsemblMetazoa" id="FBtr0076075">
    <molecule id="P14785-1"/>
    <property type="protein sequence ID" value="FBpp0075807"/>
    <property type="gene ID" value="FBgn0000404"/>
</dbReference>
<dbReference type="GeneID" id="39340"/>
<dbReference type="KEGG" id="dme:Dmel_CG5940"/>
<dbReference type="AGR" id="FB:FBgn0000404"/>
<dbReference type="CTD" id="39340"/>
<dbReference type="FlyBase" id="FBgn0000404">
    <property type="gene designation" value="CycA"/>
</dbReference>
<dbReference type="VEuPathDB" id="VectorBase:FBgn0000404"/>
<dbReference type="eggNOG" id="KOG0654">
    <property type="taxonomic scope" value="Eukaryota"/>
</dbReference>
<dbReference type="GeneTree" id="ENSGT00940000165715"/>
<dbReference type="InParanoid" id="P14785"/>
<dbReference type="OMA" id="RANPRYM"/>
<dbReference type="OrthoDB" id="5590282at2759"/>
<dbReference type="PhylomeDB" id="P14785"/>
<dbReference type="Reactome" id="R-DME-1538133">
    <property type="pathway name" value="G0 and Early G1"/>
</dbReference>
<dbReference type="Reactome" id="R-DME-174184">
    <property type="pathway name" value="Cdc20:Phospho-APC/C mediated degradation of Cyclin A"/>
</dbReference>
<dbReference type="Reactome" id="R-DME-176408">
    <property type="pathway name" value="Regulation of APC/C activators between G1/S and early anaphase"/>
</dbReference>
<dbReference type="Reactome" id="R-DME-187577">
    <property type="pathway name" value="SCF(Skp2)-mediated degradation of p27/p21"/>
</dbReference>
<dbReference type="Reactome" id="R-DME-2559582">
    <property type="pathway name" value="Senescence-Associated Secretory Phenotype (SASP)"/>
</dbReference>
<dbReference type="Reactome" id="R-DME-2559586">
    <property type="pathway name" value="DNA Damage/Telomere Stress Induced Senescence"/>
</dbReference>
<dbReference type="Reactome" id="R-DME-5689880">
    <property type="pathway name" value="Ub-specific processing proteases"/>
</dbReference>
<dbReference type="Reactome" id="R-DME-5693607">
    <property type="pathway name" value="Processing of DNA double-strand break ends"/>
</dbReference>
<dbReference type="Reactome" id="R-DME-6804116">
    <property type="pathway name" value="TP53 Regulates Transcription of Genes Involved in G1 Cell Cycle Arrest"/>
</dbReference>
<dbReference type="Reactome" id="R-DME-6804756">
    <property type="pathway name" value="Regulation of TP53 Activity through Phosphorylation"/>
</dbReference>
<dbReference type="Reactome" id="R-DME-68911">
    <property type="pathway name" value="G2 Phase"/>
</dbReference>
<dbReference type="Reactome" id="R-DME-68949">
    <property type="pathway name" value="Orc1 removal from chromatin"/>
</dbReference>
<dbReference type="Reactome" id="R-DME-69017">
    <property type="pathway name" value="CDK-mediated phosphorylation and removal of Cdc6"/>
</dbReference>
<dbReference type="Reactome" id="R-DME-69273">
    <property type="pathway name" value="Cyclin A/B1/B2 associated events during G2/M transition"/>
</dbReference>
<dbReference type="Reactome" id="R-DME-69563">
    <property type="pathway name" value="p53-Dependent G1 DNA Damage Response"/>
</dbReference>
<dbReference type="Reactome" id="R-DME-69656">
    <property type="pathway name" value="Cyclin A:Cdk2-associated events at S phase entry"/>
</dbReference>
<dbReference type="BioGRID-ORCS" id="39340">
    <property type="hits" value="1 hit in 3 CRISPR screens"/>
</dbReference>
<dbReference type="ChiTaRS" id="CycA">
    <property type="organism name" value="fly"/>
</dbReference>
<dbReference type="GenomeRNAi" id="39340"/>
<dbReference type="PRO" id="PR:P14785"/>
<dbReference type="Proteomes" id="UP000000803">
    <property type="component" value="Chromosome 3L"/>
</dbReference>
<dbReference type="Bgee" id="FBgn0000404">
    <property type="expression patterns" value="Expressed in egg cell and 109 other cell types or tissues"/>
</dbReference>
<dbReference type="ExpressionAtlas" id="P14785">
    <property type="expression patterns" value="baseline and differential"/>
</dbReference>
<dbReference type="GO" id="GO:0097124">
    <property type="term" value="C:cyclin A2-CDK2 complex"/>
    <property type="evidence" value="ECO:0000318"/>
    <property type="project" value="GO_Central"/>
</dbReference>
<dbReference type="GO" id="GO:0005737">
    <property type="term" value="C:cytoplasm"/>
    <property type="evidence" value="ECO:0000314"/>
    <property type="project" value="UniProtKB"/>
</dbReference>
<dbReference type="GO" id="GO:0005829">
    <property type="term" value="C:cytosol"/>
    <property type="evidence" value="ECO:0000314"/>
    <property type="project" value="FlyBase"/>
</dbReference>
<dbReference type="GO" id="GO:0045169">
    <property type="term" value="C:fusome"/>
    <property type="evidence" value="ECO:0000314"/>
    <property type="project" value="CACAO"/>
</dbReference>
<dbReference type="GO" id="GO:0001673">
    <property type="term" value="C:male germ cell nucleus"/>
    <property type="evidence" value="ECO:0000314"/>
    <property type="project" value="CACAO"/>
</dbReference>
<dbReference type="GO" id="GO:0005815">
    <property type="term" value="C:microtubule organizing center"/>
    <property type="evidence" value="ECO:0000318"/>
    <property type="project" value="GO_Central"/>
</dbReference>
<dbReference type="GO" id="GO:0005634">
    <property type="term" value="C:nucleus"/>
    <property type="evidence" value="ECO:0000314"/>
    <property type="project" value="UniProtKB"/>
</dbReference>
<dbReference type="GO" id="GO:0045170">
    <property type="term" value="C:spectrosome"/>
    <property type="evidence" value="ECO:0000314"/>
    <property type="project" value="FlyBase"/>
</dbReference>
<dbReference type="GO" id="GO:0045202">
    <property type="term" value="C:synapse"/>
    <property type="evidence" value="ECO:0000314"/>
    <property type="project" value="FlyBase"/>
</dbReference>
<dbReference type="GO" id="GO:0016538">
    <property type="term" value="F:cyclin-dependent protein serine/threonine kinase regulator activity"/>
    <property type="evidence" value="ECO:0000314"/>
    <property type="project" value="FlyBase"/>
</dbReference>
<dbReference type="GO" id="GO:0055059">
    <property type="term" value="P:asymmetric neuroblast division"/>
    <property type="evidence" value="ECO:0000315"/>
    <property type="project" value="FlyBase"/>
</dbReference>
<dbReference type="GO" id="GO:0000082">
    <property type="term" value="P:G1/S transition of mitotic cell cycle"/>
    <property type="evidence" value="ECO:0000315"/>
    <property type="project" value="FlyBase"/>
</dbReference>
<dbReference type="GO" id="GO:0000278">
    <property type="term" value="P:mitotic cell cycle"/>
    <property type="evidence" value="ECO:0000315"/>
    <property type="project" value="FlyBase"/>
</dbReference>
<dbReference type="GO" id="GO:0000070">
    <property type="term" value="P:mitotic sister chromatid segregation"/>
    <property type="evidence" value="ECO:0000315"/>
    <property type="project" value="FlyBase"/>
</dbReference>
<dbReference type="GO" id="GO:2000738">
    <property type="term" value="P:positive regulation of stem cell differentiation"/>
    <property type="evidence" value="ECO:0000315"/>
    <property type="project" value="FlyBase"/>
</dbReference>
<dbReference type="GO" id="GO:0007096">
    <property type="term" value="P:regulation of exit from mitosis"/>
    <property type="evidence" value="ECO:0000315"/>
    <property type="project" value="FlyBase"/>
</dbReference>
<dbReference type="GO" id="GO:0009794">
    <property type="term" value="P:regulation of mitotic cell cycle, embryonic"/>
    <property type="evidence" value="ECO:0000315"/>
    <property type="project" value="FlyBase"/>
</dbReference>
<dbReference type="GO" id="GO:0007088">
    <property type="term" value="P:regulation of mitotic nuclear division"/>
    <property type="evidence" value="ECO:0000270"/>
    <property type="project" value="UniProtKB"/>
</dbReference>
<dbReference type="GO" id="GO:0035186">
    <property type="term" value="P:syncytial blastoderm mitotic cell cycle"/>
    <property type="evidence" value="ECO:0000316"/>
    <property type="project" value="FlyBase"/>
</dbReference>
<dbReference type="CDD" id="cd20504">
    <property type="entry name" value="CYCLIN_CCNA_rpt1"/>
    <property type="match status" value="1"/>
</dbReference>
<dbReference type="FunFam" id="1.10.472.10:FF:000001">
    <property type="entry name" value="G2/mitotic-specific cyclin"/>
    <property type="match status" value="1"/>
</dbReference>
<dbReference type="Gene3D" id="1.10.472.10">
    <property type="entry name" value="Cyclin-like"/>
    <property type="match status" value="2"/>
</dbReference>
<dbReference type="InterPro" id="IPR039361">
    <property type="entry name" value="Cyclin"/>
</dbReference>
<dbReference type="InterPro" id="IPR013763">
    <property type="entry name" value="Cyclin-like_dom"/>
</dbReference>
<dbReference type="InterPro" id="IPR036915">
    <property type="entry name" value="Cyclin-like_sf"/>
</dbReference>
<dbReference type="InterPro" id="IPR004367">
    <property type="entry name" value="Cyclin_C-dom"/>
</dbReference>
<dbReference type="InterPro" id="IPR006671">
    <property type="entry name" value="Cyclin_N"/>
</dbReference>
<dbReference type="InterPro" id="IPR048258">
    <property type="entry name" value="Cyclins_cyclin-box"/>
</dbReference>
<dbReference type="PANTHER" id="PTHR10177">
    <property type="entry name" value="CYCLINS"/>
    <property type="match status" value="1"/>
</dbReference>
<dbReference type="Pfam" id="PF02984">
    <property type="entry name" value="Cyclin_C"/>
    <property type="match status" value="1"/>
</dbReference>
<dbReference type="Pfam" id="PF00134">
    <property type="entry name" value="Cyclin_N"/>
    <property type="match status" value="1"/>
</dbReference>
<dbReference type="SMART" id="SM00385">
    <property type="entry name" value="CYCLIN"/>
    <property type="match status" value="2"/>
</dbReference>
<dbReference type="SMART" id="SM01332">
    <property type="entry name" value="Cyclin_C"/>
    <property type="match status" value="1"/>
</dbReference>
<dbReference type="SUPFAM" id="SSF47954">
    <property type="entry name" value="Cyclin-like"/>
    <property type="match status" value="2"/>
</dbReference>
<dbReference type="PROSITE" id="PS00292">
    <property type="entry name" value="CYCLINS"/>
    <property type="match status" value="1"/>
</dbReference>
<feature type="chain" id="PRO_0000080345" description="G2/mitotic-specific cyclin-A">
    <location>
        <begin position="1"/>
        <end position="491"/>
    </location>
</feature>
<feature type="domain" description="Cyclin N-terminal" evidence="1">
    <location>
        <begin position="206"/>
        <end position="332"/>
    </location>
</feature>
<feature type="region of interest" description="Disordered" evidence="2">
    <location>
        <begin position="1"/>
        <end position="21"/>
    </location>
</feature>
<feature type="splice variant" id="VSP_001249" description="In isoform B." evidence="5">
    <location>
        <begin position="1"/>
        <end position="146"/>
    </location>
</feature>
<feature type="mutagenesis site" description="Abolishes binding to Z600; when associated with A-239 and A-242." evidence="3">
    <original>M</original>
    <variation>A</variation>
    <location>
        <position position="235"/>
    </location>
</feature>
<feature type="mutagenesis site" description="Abolishes binding to Z600; when associated with A-235 and A-242." evidence="3">
    <original>L</original>
    <variation>A</variation>
    <location>
        <position position="239"/>
    </location>
</feature>
<feature type="mutagenesis site" description="Abolishes binding to Z600; when associated with A-235 and A-239." evidence="3">
    <original>W</original>
    <variation>A</variation>
    <location>
        <position position="242"/>
    </location>
</feature>
<feature type="sequence conflict" description="In Ref. 1; BAA01629." evidence="6" ref="1">
    <original>M</original>
    <variation>I</variation>
    <location>
        <position position="147"/>
    </location>
</feature>
<feature type="sequence conflict" description="In Ref. 1; BAA01628/BAA01629." evidence="6" ref="1">
    <original>V</original>
    <variation>A</variation>
    <location>
        <position position="179"/>
    </location>
</feature>
<feature type="sequence conflict" description="In Ref. 1; BAA01629." evidence="6" ref="1">
    <original>V</original>
    <variation>M</variation>
    <location>
        <position position="200"/>
    </location>
</feature>
<feature type="sequence conflict" description="In Ref. 5; AAN71390." evidence="6" ref="5">
    <original>P</original>
    <variation>A</variation>
    <location>
        <position position="220"/>
    </location>
</feature>
<feature type="sequence conflict" description="In Ref. 2; AAA28435." evidence="6" ref="2">
    <original>L</original>
    <variation>R</variation>
    <location>
        <position position="223"/>
    </location>
</feature>
<feature type="sequence conflict" description="In Ref. 1; BAA01629." evidence="6" ref="1">
    <original>H</original>
    <variation>Q</variation>
    <location>
        <position position="474"/>
    </location>
</feature>
<protein>
    <recommendedName>
        <fullName>G2/mitotic-specific cyclin-A</fullName>
    </recommendedName>
</protein>
<evidence type="ECO:0000255" key="1"/>
<evidence type="ECO:0000256" key="2">
    <source>
        <dbReference type="SAM" id="MobiDB-lite"/>
    </source>
</evidence>
<evidence type="ECO:0000269" key="3">
    <source>
    </source>
</evidence>
<evidence type="ECO:0000269" key="4">
    <source>
    </source>
</evidence>
<evidence type="ECO:0000303" key="5">
    <source>
    </source>
</evidence>
<evidence type="ECO:0000305" key="6"/>
<name>CCNA_DROME</name>
<accession>P14785</accession>
<accession>Q8IGR7</accession>
<accession>Q9VTP6</accession>
<accession>Q9VTP7</accession>
<keyword id="KW-0025">Alternative splicing</keyword>
<keyword id="KW-0131">Cell cycle</keyword>
<keyword id="KW-0132">Cell division</keyword>
<keyword id="KW-0195">Cyclin</keyword>
<keyword id="KW-0498">Mitosis</keyword>
<keyword id="KW-1185">Reference proteome</keyword>
<keyword id="KW-0832">Ubl conjugation</keyword>
<gene>
    <name type="primary">CycA</name>
    <name type="ORF">CG5940</name>
</gene>
<sequence length="491" mass="56152">MASFQIHQDMSNKENPGIKIPAGVKNTKQPLAVIGGKAEKNALAPRANFAVLNGNNNVPRPAGKVQVFRDVRNLNVDENVEYGAKKSNVVPVVEQFKTFSVYEDNNDTQVAPSGKSLASLVDKENHDVKFGAGQKELVDYDLDSTPMSVTDVQSPMSVDRSILGVIQSSDISVGTETGVSPTGRVKELPPRNDRQRFLEVVQYQMDILEYFRESEKKHRPKPLYMRRQKDISHNMRSILIDWLVEVSEEYKLDTETLYLSVFYLDRFLSQMAVVRSKLQLVGTAAMYIAAKYEEIYPPEVGEFVFLTDDSYTKAQVLRMEQVILKILSFDLCTPTAYVFINTYAVLCDMPEKLKYMTLYISELSLMEGETYLQYLPSLMSSASVALARHILGMEMWTPRLEEITTYKLEDLKTVVLHLCHTHKTAKELNTQAMREKYNRDTYKKVAMMESVEMSKDDFDQLCEAYNCKQKEDEHQQPDINTKSNVNLFYKF</sequence>
<organism>
    <name type="scientific">Drosophila melanogaster</name>
    <name type="common">Fruit fly</name>
    <dbReference type="NCBI Taxonomy" id="7227"/>
    <lineage>
        <taxon>Eukaryota</taxon>
        <taxon>Metazoa</taxon>
        <taxon>Ecdysozoa</taxon>
        <taxon>Arthropoda</taxon>
        <taxon>Hexapoda</taxon>
        <taxon>Insecta</taxon>
        <taxon>Pterygota</taxon>
        <taxon>Neoptera</taxon>
        <taxon>Endopterygota</taxon>
        <taxon>Diptera</taxon>
        <taxon>Brachycera</taxon>
        <taxon>Muscomorpha</taxon>
        <taxon>Ephydroidea</taxon>
        <taxon>Drosophilidae</taxon>
        <taxon>Drosophila</taxon>
        <taxon>Sophophora</taxon>
    </lineage>
</organism>
<proteinExistence type="evidence at protein level"/>
<comment type="function">
    <text>Essential for the control of the cell cycle at the G2/M (mitosis) transition. Interacts with the Cdk1 and Cdk2 protein kinases to form MPF. G2/M cyclins accumulate steadily during G2 and are abruptly destroyed at mitosis.</text>
</comment>
<comment type="subunit">
    <text evidence="3 4">Component of the Frs-CycA-Cdk1 complex composed of CycA, Cdk1 and Z600 (PubMed:17431409). Interacts (via C-terminus) with Z600 (PubMed:17431409). Interacts with otu and (via C-terminus) with bam; the interaction stabilizes CycA by negatively regulating its ubiquitination (PubMed:28484036).</text>
</comment>
<comment type="interaction">
    <interactant intactId="EBI-240333">
        <id>P14785</id>
    </interactant>
    <interactant intactId="EBI-108689">
        <id>P23572</id>
        <label>Cdk1</label>
    </interactant>
    <organismsDiffer>false</organismsDiffer>
    <experiments>2</experiments>
</comment>
<comment type="interaction">
    <interactant intactId="EBI-240333">
        <id>P14785</id>
    </interactant>
    <interactant intactId="EBI-176696">
        <id>Q24044</id>
        <label>fzy</label>
    </interactant>
    <organismsDiffer>false</organismsDiffer>
    <experiments>2</experiments>
</comment>
<comment type="interaction">
    <interactant intactId="EBI-240333">
        <id>P14785</id>
    </interactant>
    <interactant intactId="EBI-7376821">
        <id>P22469</id>
        <label>Z600</label>
    </interactant>
    <organismsDiffer>false</organismsDiffer>
    <experiments>4</experiments>
</comment>
<comment type="alternative products">
    <event type="alternative splicing"/>
    <isoform>
        <id>P14785-1</id>
        <name>A</name>
        <name>Long</name>
        <sequence type="displayed"/>
    </isoform>
    <isoform>
        <id>P14785-2</id>
        <name>B</name>
        <name>Short</name>
        <sequence type="described" ref="VSP_001249"/>
    </isoform>
</comment>
<comment type="PTM">
    <text evidence="4">Ubiquitinated (PubMed:28484036). Ubiquitination state is negatively regulated by a deubiquitinase complex made up of bam and otu (PubMed:28484036).</text>
</comment>
<comment type="disruption phenotype">
    <text evidence="4">RNAi-mediated knockdown has no effect on germline stem cell replication or differentiation.</text>
</comment>
<comment type="similarity">
    <text evidence="6">Belongs to the cyclin family. Cyclin AB subfamily.</text>
</comment>